<name>YQGF_MYCTA</name>
<protein>
    <recommendedName>
        <fullName evidence="1">Putative pre-16S rRNA nuclease</fullName>
        <ecNumber evidence="1">3.1.-.-</ecNumber>
    </recommendedName>
</protein>
<feature type="chain" id="PRO_1000061540" description="Putative pre-16S rRNA nuclease">
    <location>
        <begin position="1"/>
        <end position="170"/>
    </location>
</feature>
<feature type="region of interest" description="Disordered" evidence="2">
    <location>
        <begin position="1"/>
        <end position="25"/>
    </location>
</feature>
<feature type="compositionally biased region" description="Basic and acidic residues" evidence="2">
    <location>
        <begin position="7"/>
        <end position="21"/>
    </location>
</feature>
<organism>
    <name type="scientific">Mycobacterium tuberculosis (strain ATCC 25177 / H37Ra)</name>
    <dbReference type="NCBI Taxonomy" id="419947"/>
    <lineage>
        <taxon>Bacteria</taxon>
        <taxon>Bacillati</taxon>
        <taxon>Actinomycetota</taxon>
        <taxon>Actinomycetes</taxon>
        <taxon>Mycobacteriales</taxon>
        <taxon>Mycobacteriaceae</taxon>
        <taxon>Mycobacterium</taxon>
        <taxon>Mycobacterium tuberculosis complex</taxon>
    </lineage>
</organism>
<comment type="function">
    <text evidence="1">Could be a nuclease involved in processing of the 5'-end of pre-16S rRNA.</text>
</comment>
<comment type="subcellular location">
    <subcellularLocation>
        <location evidence="1">Cytoplasm</location>
    </subcellularLocation>
</comment>
<comment type="similarity">
    <text evidence="1">Belongs to the YqgF nuclease family.</text>
</comment>
<dbReference type="EC" id="3.1.-.-" evidence="1"/>
<dbReference type="EMBL" id="CP000611">
    <property type="protein sequence ID" value="ABQ74354.1"/>
    <property type="molecule type" value="Genomic_DNA"/>
</dbReference>
<dbReference type="SMR" id="A5U5Q4"/>
<dbReference type="KEGG" id="mra:MRA_2583"/>
<dbReference type="eggNOG" id="COG0816">
    <property type="taxonomic scope" value="Bacteria"/>
</dbReference>
<dbReference type="HOGENOM" id="CLU_098240_0_1_11"/>
<dbReference type="Proteomes" id="UP000001988">
    <property type="component" value="Chromosome"/>
</dbReference>
<dbReference type="GO" id="GO:0005829">
    <property type="term" value="C:cytosol"/>
    <property type="evidence" value="ECO:0007669"/>
    <property type="project" value="TreeGrafter"/>
</dbReference>
<dbReference type="GO" id="GO:0004518">
    <property type="term" value="F:nuclease activity"/>
    <property type="evidence" value="ECO:0007669"/>
    <property type="project" value="UniProtKB-KW"/>
</dbReference>
<dbReference type="GO" id="GO:0000967">
    <property type="term" value="P:rRNA 5'-end processing"/>
    <property type="evidence" value="ECO:0007669"/>
    <property type="project" value="UniProtKB-UniRule"/>
</dbReference>
<dbReference type="CDD" id="cd16964">
    <property type="entry name" value="YqgF"/>
    <property type="match status" value="1"/>
</dbReference>
<dbReference type="FunFam" id="3.30.420.140:FF:000005">
    <property type="entry name" value="Putative pre-16S rRNA nuclease"/>
    <property type="match status" value="1"/>
</dbReference>
<dbReference type="Gene3D" id="3.30.420.140">
    <property type="entry name" value="YqgF/RNase H-like domain"/>
    <property type="match status" value="1"/>
</dbReference>
<dbReference type="HAMAP" id="MF_00651">
    <property type="entry name" value="Nuclease_YqgF"/>
    <property type="match status" value="1"/>
</dbReference>
<dbReference type="InterPro" id="IPR012337">
    <property type="entry name" value="RNaseH-like_sf"/>
</dbReference>
<dbReference type="InterPro" id="IPR005227">
    <property type="entry name" value="YqgF"/>
</dbReference>
<dbReference type="InterPro" id="IPR006641">
    <property type="entry name" value="YqgF/RNaseH-like_dom"/>
</dbReference>
<dbReference type="InterPro" id="IPR037027">
    <property type="entry name" value="YqgF/RNaseH-like_dom_sf"/>
</dbReference>
<dbReference type="NCBIfam" id="TIGR00250">
    <property type="entry name" value="RNAse_H_YqgF"/>
    <property type="match status" value="1"/>
</dbReference>
<dbReference type="PANTHER" id="PTHR33317">
    <property type="entry name" value="POLYNUCLEOTIDYL TRANSFERASE, RIBONUCLEASE H-LIKE SUPERFAMILY PROTEIN"/>
    <property type="match status" value="1"/>
</dbReference>
<dbReference type="PANTHER" id="PTHR33317:SF4">
    <property type="entry name" value="POLYNUCLEOTIDYL TRANSFERASE, RIBONUCLEASE H-LIKE SUPERFAMILY PROTEIN"/>
    <property type="match status" value="1"/>
</dbReference>
<dbReference type="Pfam" id="PF03652">
    <property type="entry name" value="RuvX"/>
    <property type="match status" value="1"/>
</dbReference>
<dbReference type="SMART" id="SM00732">
    <property type="entry name" value="YqgFc"/>
    <property type="match status" value="1"/>
</dbReference>
<dbReference type="SUPFAM" id="SSF53098">
    <property type="entry name" value="Ribonuclease H-like"/>
    <property type="match status" value="1"/>
</dbReference>
<gene>
    <name type="ordered locus">MRA_2583</name>
</gene>
<keyword id="KW-0963">Cytoplasm</keyword>
<keyword id="KW-0378">Hydrolase</keyword>
<keyword id="KW-0540">Nuclease</keyword>
<keyword id="KW-1185">Reference proteome</keyword>
<keyword id="KW-0690">Ribosome biogenesis</keyword>
<proteinExistence type="inferred from homology"/>
<sequence>MVPAQHRPPDRPGDPAHDPGRGRRLGIDVGAARIGVACSDPDAILATPVETVRRDRSGKHLRRLAALAAELEAVEVIVGLPRTLADRIGRSAQDAIELAEALARRVSPTPVRLADERLTTVSAQRSLRQAGVRASEQRAVIDQAAAVAILQSWLDERLAAMAGTQEGSDA</sequence>
<evidence type="ECO:0000255" key="1">
    <source>
        <dbReference type="HAMAP-Rule" id="MF_00651"/>
    </source>
</evidence>
<evidence type="ECO:0000256" key="2">
    <source>
        <dbReference type="SAM" id="MobiDB-lite"/>
    </source>
</evidence>
<reference key="1">
    <citation type="journal article" date="2008" name="PLoS ONE">
        <title>Genetic basis of virulence attenuation revealed by comparative genomic analysis of Mycobacterium tuberculosis strain H37Ra versus H37Rv.</title>
        <authorList>
            <person name="Zheng H."/>
            <person name="Lu L."/>
            <person name="Wang B."/>
            <person name="Pu S."/>
            <person name="Zhang X."/>
            <person name="Zhu G."/>
            <person name="Shi W."/>
            <person name="Zhang L."/>
            <person name="Wang H."/>
            <person name="Wang S."/>
            <person name="Zhao G."/>
            <person name="Zhang Y."/>
        </authorList>
    </citation>
    <scope>NUCLEOTIDE SEQUENCE [LARGE SCALE GENOMIC DNA]</scope>
    <source>
        <strain>ATCC 25177 / H37Ra</strain>
    </source>
</reference>
<accession>A5U5Q4</accession>